<dbReference type="EMBL" id="CP000496">
    <property type="protein sequence ID" value="ABN65153.2"/>
    <property type="molecule type" value="Genomic_DNA"/>
</dbReference>
<dbReference type="RefSeq" id="XP_001383182.2">
    <property type="nucleotide sequence ID" value="XM_001383145.1"/>
</dbReference>
<dbReference type="SMR" id="A3LQ52"/>
<dbReference type="FunCoup" id="A3LQ52">
    <property type="interactions" value="67"/>
</dbReference>
<dbReference type="STRING" id="322104.A3LQ52"/>
<dbReference type="GeneID" id="4837552"/>
<dbReference type="KEGG" id="pic:PICST_88098"/>
<dbReference type="eggNOG" id="ENOG502QUSW">
    <property type="taxonomic scope" value="Eukaryota"/>
</dbReference>
<dbReference type="HOGENOM" id="CLU_019840_1_0_1"/>
<dbReference type="InParanoid" id="A3LQ52"/>
<dbReference type="OMA" id="WENGVND"/>
<dbReference type="OrthoDB" id="4081443at2759"/>
<dbReference type="Proteomes" id="UP000002258">
    <property type="component" value="Chromosome 2"/>
</dbReference>
<dbReference type="GO" id="GO:0005743">
    <property type="term" value="C:mitochondrial inner membrane"/>
    <property type="evidence" value="ECO:0007669"/>
    <property type="project" value="UniProtKB-SubCell"/>
</dbReference>
<dbReference type="GO" id="GO:0030435">
    <property type="term" value="P:sporulation resulting in formation of a cellular spore"/>
    <property type="evidence" value="ECO:0007669"/>
    <property type="project" value="UniProtKB-KW"/>
</dbReference>
<reference key="1">
    <citation type="journal article" date="2007" name="Nat. Biotechnol.">
        <title>Genome sequence of the lignocellulose-bioconverting and xylose-fermenting yeast Pichia stipitis.</title>
        <authorList>
            <person name="Jeffries T.W."/>
            <person name="Grigoriev I.V."/>
            <person name="Grimwood J."/>
            <person name="Laplaza J.M."/>
            <person name="Aerts A."/>
            <person name="Salamov A."/>
            <person name="Schmutz J."/>
            <person name="Lindquist E."/>
            <person name="Dehal P."/>
            <person name="Shapiro H."/>
            <person name="Jin Y.-S."/>
            <person name="Passoth V."/>
            <person name="Richardson P.M."/>
        </authorList>
    </citation>
    <scope>NUCLEOTIDE SEQUENCE [LARGE SCALE GENOMIC DNA]</scope>
    <source>
        <strain>ATCC 58785 / CBS 6054 / NBRC 10063 / NRRL Y-11545</strain>
    </source>
</reference>
<name>RMD9_PICST</name>
<organism>
    <name type="scientific">Scheffersomyces stipitis (strain ATCC 58785 / CBS 6054 / NBRC 10063 / NRRL Y-11545)</name>
    <name type="common">Yeast</name>
    <name type="synonym">Pichia stipitis</name>
    <dbReference type="NCBI Taxonomy" id="322104"/>
    <lineage>
        <taxon>Eukaryota</taxon>
        <taxon>Fungi</taxon>
        <taxon>Dikarya</taxon>
        <taxon>Ascomycota</taxon>
        <taxon>Saccharomycotina</taxon>
        <taxon>Pichiomycetes</taxon>
        <taxon>Debaryomycetaceae</taxon>
        <taxon>Scheffersomyces</taxon>
    </lineage>
</organism>
<evidence type="ECO:0000250" key="1">
    <source>
        <dbReference type="UniProtKB" id="P53140"/>
    </source>
</evidence>
<evidence type="ECO:0000255" key="2"/>
<evidence type="ECO:0000256" key="3">
    <source>
        <dbReference type="SAM" id="MobiDB-lite"/>
    </source>
</evidence>
<evidence type="ECO:0000305" key="4"/>
<accession>A3LQ52</accession>
<protein>
    <recommendedName>
        <fullName evidence="1">RNA-binding protein RMD9, mitochondrial</fullName>
    </recommendedName>
</protein>
<proteinExistence type="inferred from homology"/>
<gene>
    <name type="primary">RMD9</name>
    <name type="ORF">PICST_88098</name>
</gene>
<comment type="function">
    <text evidence="1">Binds the 3'-UTR of mitochondrial mRNAs. Involved in the processing or stability of mitochondrial mRNAs.</text>
</comment>
<comment type="subunit">
    <text evidence="1">Monomer.</text>
</comment>
<comment type="subcellular location">
    <subcellularLocation>
        <location evidence="1">Mitochondrion inner membrane</location>
        <topology evidence="1">Peripheral membrane protein</topology>
        <orientation evidence="1">Matrix side</orientation>
    </subcellularLocation>
</comment>
<comment type="PTM">
    <text evidence="1">Phosphorylated. Phosphorylation promotes binding to RNA.</text>
</comment>
<comment type="similarity">
    <text evidence="4">Belongs to the RMD9 family.</text>
</comment>
<sequence>MFRLVSSNAQGSFRSSLLTKVRIPISVPASSPLNTSTSNNTTTNNNNFGVNNSTNNTQFTRHQSSAAVDLSARKVYQDEFLRSHSSFTAPDHETKVKLNHFKELLVTGNQKLRALNRQEARAFYSVLQSLSHMLEDAKLRRSLNVDLLHQYSLLLHSAIFSSRTNRLAEKRNRDKDEYNATSYTDEVVLRGSVLNFAQLVEAGEFKYCFTDKVLQYLLYSMFQFKFNTEALNLWENGVNDAETGSVYLRPLVLATVLPRAFELKRFTYEEILHIYELNTKKEQFPHHTLVTAMGKIAIHAGDYSRALDFLERLLEKYDQKPTGLKLASLSDLHLSFIGDCKEIAIAKHFFDKVIEDELPYKVLLKVPYVTSLLDNAYQAGDSLEEAIYFWKNSVAYYMKTRQQLNSRYSLLNNKFFELFFQAYPELNEESFAMLRDLITFYAQTKPLDETFLNTIITHYSWKSKEVLDQLMQNYEIYEVERTPVSHRICLKKTGQYADYTNEEILARWNENLKCLDNSKYFYIPNADWSALRDATIYSIVPDKRTDLYYSVLNTYKNYMQDARACIKFVGNWTKRPAYLESIARITLEKNFEPAVKVDVPLFRNLKENVNYADATRDLIITARNSKPRV</sequence>
<keyword id="KW-0472">Membrane</keyword>
<keyword id="KW-0496">Mitochondrion</keyword>
<keyword id="KW-0999">Mitochondrion inner membrane</keyword>
<keyword id="KW-0597">Phosphoprotein</keyword>
<keyword id="KW-1185">Reference proteome</keyword>
<keyword id="KW-0749">Sporulation</keyword>
<keyword id="KW-0809">Transit peptide</keyword>
<feature type="transit peptide" description="Mitochondrion" evidence="2">
    <location>
        <begin position="1"/>
        <end position="62"/>
    </location>
</feature>
<feature type="chain" id="PRO_0000301788" description="RNA-binding protein RMD9, mitochondrial">
    <location>
        <begin position="63"/>
        <end position="629"/>
    </location>
</feature>
<feature type="region of interest" description="Disordered" evidence="3">
    <location>
        <begin position="28"/>
        <end position="57"/>
    </location>
</feature>
<feature type="compositionally biased region" description="Low complexity" evidence="3">
    <location>
        <begin position="34"/>
        <end position="57"/>
    </location>
</feature>